<proteinExistence type="inferred from homology"/>
<keyword id="KW-0472">Membrane</keyword>
<keyword id="KW-0496">Mitochondrion</keyword>
<keyword id="KW-0999">Mitochondrion inner membrane</keyword>
<keyword id="KW-1185">Reference proteome</keyword>
<keyword id="KW-0677">Repeat</keyword>
<keyword id="KW-0812">Transmembrane</keyword>
<keyword id="KW-1133">Transmembrane helix</keyword>
<keyword id="KW-0813">Transport</keyword>
<organism>
    <name type="scientific">Dictyostelium discoideum</name>
    <name type="common">Social amoeba</name>
    <dbReference type="NCBI Taxonomy" id="44689"/>
    <lineage>
        <taxon>Eukaryota</taxon>
        <taxon>Amoebozoa</taxon>
        <taxon>Evosea</taxon>
        <taxon>Eumycetozoa</taxon>
        <taxon>Dictyostelia</taxon>
        <taxon>Dictyosteliales</taxon>
        <taxon>Dictyosteliaceae</taxon>
        <taxon>Dictyostelium</taxon>
    </lineage>
</organism>
<comment type="function">
    <text evidence="1">Mitochondrial solute carriers shuttle metabolites, nucleotides, and cofactors through the mitochondrial inner membrane. Mitochondrial iron transporter that mediates iron uptake. Probably required for heme synthesis of hemoproteins and Fe-S cluster assembly (By similarity).</text>
</comment>
<comment type="subcellular location">
    <subcellularLocation>
        <location evidence="1">Mitochondrion inner membrane</location>
        <topology evidence="1">Multi-pass membrane protein</topology>
    </subcellularLocation>
</comment>
<comment type="similarity">
    <text evidence="3">Belongs to the mitochondrial carrier (TC 2.A.29) family.</text>
</comment>
<feature type="chain" id="PRO_0000329413" description="Mitoferrin">
    <location>
        <begin position="1"/>
        <end position="308"/>
    </location>
</feature>
<feature type="transmembrane region" description="Helical; Name=1" evidence="2">
    <location>
        <begin position="13"/>
        <end position="29"/>
    </location>
</feature>
<feature type="transmembrane region" description="Helical; Name=2" evidence="2">
    <location>
        <begin position="69"/>
        <end position="89"/>
    </location>
</feature>
<feature type="transmembrane region" description="Helical; Name=3" evidence="2">
    <location>
        <begin position="111"/>
        <end position="131"/>
    </location>
</feature>
<feature type="transmembrane region" description="Helical; Name=4" evidence="2">
    <location>
        <begin position="168"/>
        <end position="184"/>
    </location>
</feature>
<feature type="transmembrane region" description="Helical; Name=5" evidence="2">
    <location>
        <begin position="213"/>
        <end position="233"/>
    </location>
</feature>
<feature type="transmembrane region" description="Helical; Name=6" evidence="2">
    <location>
        <begin position="285"/>
        <end position="302"/>
    </location>
</feature>
<feature type="repeat" description="Solcar 1">
    <location>
        <begin position="14"/>
        <end position="100"/>
    </location>
</feature>
<feature type="repeat" description="Solcar 2">
    <location>
        <begin position="108"/>
        <end position="192"/>
    </location>
</feature>
<feature type="repeat" description="Solcar 3">
    <location>
        <begin position="207"/>
        <end position="305"/>
    </location>
</feature>
<name>MFRN_DICDI</name>
<protein>
    <recommendedName>
        <fullName>Mitoferrin</fullName>
    </recommendedName>
    <alternativeName>
        <fullName>Mitochondrial substrate carrier family protein F</fullName>
    </alternativeName>
</protein>
<accession>Q55DY8</accession>
<evidence type="ECO:0000250" key="1"/>
<evidence type="ECO:0000255" key="2"/>
<evidence type="ECO:0000305" key="3"/>
<sequence length="308" mass="33914">MGGDHGHSHGDEGGSFYVHLIAGAAAGFAEHCGMYPIDTIKTHIQAIKPGAMQTSSLQITKHIIQQHGITGLFRGLTAVAAGAAPSHAVHFSIYELLKFKFIGSDEDHHPIKVGIAGAIATMTSEAVASPMDVVKQRLQLQITDYKGLTDCTKRIWVKEGIRGFYSGYTTTLVMNVPYNIVYFASYESLKKIIQPWFNNKNPEERSYQLIDHLVAGGGAGMLAAAFTNPFDVVKTRLQTQSDFIASSTINSAKSIKRYGGMMDAMKTIWIEEGMDGYLRGMKPRMVFHSMSSAIVWSVYEYFKFILGE</sequence>
<reference key="1">
    <citation type="journal article" date="2005" name="Nature">
        <title>The genome of the social amoeba Dictyostelium discoideum.</title>
        <authorList>
            <person name="Eichinger L."/>
            <person name="Pachebat J.A."/>
            <person name="Gloeckner G."/>
            <person name="Rajandream M.A."/>
            <person name="Sucgang R."/>
            <person name="Berriman M."/>
            <person name="Song J."/>
            <person name="Olsen R."/>
            <person name="Szafranski K."/>
            <person name="Xu Q."/>
            <person name="Tunggal B."/>
            <person name="Kummerfeld S."/>
            <person name="Madera M."/>
            <person name="Konfortov B.A."/>
            <person name="Rivero F."/>
            <person name="Bankier A.T."/>
            <person name="Lehmann R."/>
            <person name="Hamlin N."/>
            <person name="Davies R."/>
            <person name="Gaudet P."/>
            <person name="Fey P."/>
            <person name="Pilcher K."/>
            <person name="Chen G."/>
            <person name="Saunders D."/>
            <person name="Sodergren E.J."/>
            <person name="Davis P."/>
            <person name="Kerhornou A."/>
            <person name="Nie X."/>
            <person name="Hall N."/>
            <person name="Anjard C."/>
            <person name="Hemphill L."/>
            <person name="Bason N."/>
            <person name="Farbrother P."/>
            <person name="Desany B."/>
            <person name="Just E."/>
            <person name="Morio T."/>
            <person name="Rost R."/>
            <person name="Churcher C.M."/>
            <person name="Cooper J."/>
            <person name="Haydock S."/>
            <person name="van Driessche N."/>
            <person name="Cronin A."/>
            <person name="Goodhead I."/>
            <person name="Muzny D.M."/>
            <person name="Mourier T."/>
            <person name="Pain A."/>
            <person name="Lu M."/>
            <person name="Harper D."/>
            <person name="Lindsay R."/>
            <person name="Hauser H."/>
            <person name="James K.D."/>
            <person name="Quiles M."/>
            <person name="Madan Babu M."/>
            <person name="Saito T."/>
            <person name="Buchrieser C."/>
            <person name="Wardroper A."/>
            <person name="Felder M."/>
            <person name="Thangavelu M."/>
            <person name="Johnson D."/>
            <person name="Knights A."/>
            <person name="Loulseged H."/>
            <person name="Mungall K.L."/>
            <person name="Oliver K."/>
            <person name="Price C."/>
            <person name="Quail M.A."/>
            <person name="Urushihara H."/>
            <person name="Hernandez J."/>
            <person name="Rabbinowitsch E."/>
            <person name="Steffen D."/>
            <person name="Sanders M."/>
            <person name="Ma J."/>
            <person name="Kohara Y."/>
            <person name="Sharp S."/>
            <person name="Simmonds M.N."/>
            <person name="Spiegler S."/>
            <person name="Tivey A."/>
            <person name="Sugano S."/>
            <person name="White B."/>
            <person name="Walker D."/>
            <person name="Woodward J.R."/>
            <person name="Winckler T."/>
            <person name="Tanaka Y."/>
            <person name="Shaulsky G."/>
            <person name="Schleicher M."/>
            <person name="Weinstock G.M."/>
            <person name="Rosenthal A."/>
            <person name="Cox E.C."/>
            <person name="Chisholm R.L."/>
            <person name="Gibbs R.A."/>
            <person name="Loomis W.F."/>
            <person name="Platzer M."/>
            <person name="Kay R.R."/>
            <person name="Williams J.G."/>
            <person name="Dear P.H."/>
            <person name="Noegel A.A."/>
            <person name="Barrell B.G."/>
            <person name="Kuspa A."/>
        </authorList>
    </citation>
    <scope>NUCLEOTIDE SEQUENCE [LARGE SCALE GENOMIC DNA]</scope>
    <source>
        <strain>AX4</strain>
    </source>
</reference>
<reference key="2">
    <citation type="journal article" date="2007" name="Biochimie">
        <title>Mitochondrial carrier family: repertoire and peculiarities of the cellular slime mould Dictyostelium discoideum.</title>
        <authorList>
            <person name="Satre M."/>
            <person name="Mattei S."/>
            <person name="Aubry L."/>
            <person name="Gaudet P."/>
            <person name="Pelosi L."/>
            <person name="Brandolin G."/>
            <person name="Klein G."/>
        </authorList>
    </citation>
    <scope>REVIEW</scope>
</reference>
<dbReference type="EMBL" id="AAFI02000005">
    <property type="protein sequence ID" value="EAL72085.1"/>
    <property type="molecule type" value="Genomic_DNA"/>
</dbReference>
<dbReference type="RefSeq" id="XP_645993.1">
    <property type="nucleotide sequence ID" value="XM_640901.1"/>
</dbReference>
<dbReference type="SMR" id="Q55DY8"/>
<dbReference type="FunCoup" id="Q55DY8">
    <property type="interactions" value="715"/>
</dbReference>
<dbReference type="STRING" id="44689.Q55DY8"/>
<dbReference type="PaxDb" id="44689-DDB0237598"/>
<dbReference type="EnsemblProtists" id="EAL72085">
    <property type="protein sequence ID" value="EAL72085"/>
    <property type="gene ID" value="DDB_G0269470"/>
</dbReference>
<dbReference type="GeneID" id="8616939"/>
<dbReference type="KEGG" id="ddi:DDB_G0269470"/>
<dbReference type="dictyBase" id="DDB_G0269470">
    <property type="gene designation" value="mcfF"/>
</dbReference>
<dbReference type="VEuPathDB" id="AmoebaDB:DDB_G0269470"/>
<dbReference type="eggNOG" id="KOG0760">
    <property type="taxonomic scope" value="Eukaryota"/>
</dbReference>
<dbReference type="HOGENOM" id="CLU_015166_3_1_1"/>
<dbReference type="InParanoid" id="Q55DY8"/>
<dbReference type="OMA" id="AYECSKE"/>
<dbReference type="PhylomeDB" id="Q55DY8"/>
<dbReference type="PRO" id="PR:Q55DY8"/>
<dbReference type="Proteomes" id="UP000002195">
    <property type="component" value="Chromosome 1"/>
</dbReference>
<dbReference type="GO" id="GO:0005743">
    <property type="term" value="C:mitochondrial inner membrane"/>
    <property type="evidence" value="ECO:0007669"/>
    <property type="project" value="UniProtKB-SubCell"/>
</dbReference>
<dbReference type="GO" id="GO:0031966">
    <property type="term" value="C:mitochondrial membrane"/>
    <property type="evidence" value="ECO:0000318"/>
    <property type="project" value="GO_Central"/>
</dbReference>
<dbReference type="GO" id="GO:0005739">
    <property type="term" value="C:mitochondrion"/>
    <property type="evidence" value="ECO:0000250"/>
    <property type="project" value="dictyBase"/>
</dbReference>
<dbReference type="GO" id="GO:0015093">
    <property type="term" value="F:ferrous iron transmembrane transporter activity"/>
    <property type="evidence" value="ECO:0000318"/>
    <property type="project" value="GO_Central"/>
</dbReference>
<dbReference type="GO" id="GO:0005381">
    <property type="term" value="F:iron ion transmembrane transporter activity"/>
    <property type="evidence" value="ECO:0000250"/>
    <property type="project" value="dictyBase"/>
</dbReference>
<dbReference type="GO" id="GO:0048250">
    <property type="term" value="P:iron import into the mitochondrion"/>
    <property type="evidence" value="ECO:0000250"/>
    <property type="project" value="dictyBase"/>
</dbReference>
<dbReference type="FunFam" id="1.50.40.10:FF:000245">
    <property type="entry name" value="Mitochondrial RNA-splicing protein, putative"/>
    <property type="match status" value="1"/>
</dbReference>
<dbReference type="Gene3D" id="1.50.40.10">
    <property type="entry name" value="Mitochondrial carrier domain"/>
    <property type="match status" value="2"/>
</dbReference>
<dbReference type="InterPro" id="IPR002067">
    <property type="entry name" value="Mit_carrier"/>
</dbReference>
<dbReference type="InterPro" id="IPR018108">
    <property type="entry name" value="Mitochondrial_sb/sol_carrier"/>
</dbReference>
<dbReference type="InterPro" id="IPR023395">
    <property type="entry name" value="Mt_carrier_dom_sf"/>
</dbReference>
<dbReference type="PANTHER" id="PTHR45758:SF4">
    <property type="entry name" value="MITOFERRIN-1"/>
    <property type="match status" value="1"/>
</dbReference>
<dbReference type="PANTHER" id="PTHR45758">
    <property type="entry name" value="MITOFERRIN-1-RELATED"/>
    <property type="match status" value="1"/>
</dbReference>
<dbReference type="Pfam" id="PF00153">
    <property type="entry name" value="Mito_carr"/>
    <property type="match status" value="3"/>
</dbReference>
<dbReference type="PRINTS" id="PR00926">
    <property type="entry name" value="MITOCARRIER"/>
</dbReference>
<dbReference type="SUPFAM" id="SSF103506">
    <property type="entry name" value="Mitochondrial carrier"/>
    <property type="match status" value="1"/>
</dbReference>
<dbReference type="PROSITE" id="PS50920">
    <property type="entry name" value="SOLCAR"/>
    <property type="match status" value="3"/>
</dbReference>
<gene>
    <name type="primary">mcfF</name>
    <name type="ORF">DDB_G0269470</name>
</gene>